<comment type="function">
    <text evidence="1">Catalyzes the ATP-dependent 2-thiolation of cytidine in position 32 of tRNA, to form 2-thiocytidine (s(2)C32). The sulfur atoms are provided by the cysteine/cysteine desulfurase (IscS) system.</text>
</comment>
<comment type="catalytic activity">
    <reaction evidence="1">
        <text>cytidine(32) in tRNA + S-sulfanyl-L-cysteinyl-[cysteine desulfurase] + AH2 + ATP = 2-thiocytidine(32) in tRNA + L-cysteinyl-[cysteine desulfurase] + A + AMP + diphosphate + H(+)</text>
        <dbReference type="Rhea" id="RHEA:57048"/>
        <dbReference type="Rhea" id="RHEA-COMP:10288"/>
        <dbReference type="Rhea" id="RHEA-COMP:12157"/>
        <dbReference type="Rhea" id="RHEA-COMP:12158"/>
        <dbReference type="Rhea" id="RHEA-COMP:14821"/>
        <dbReference type="ChEBI" id="CHEBI:13193"/>
        <dbReference type="ChEBI" id="CHEBI:15378"/>
        <dbReference type="ChEBI" id="CHEBI:17499"/>
        <dbReference type="ChEBI" id="CHEBI:29950"/>
        <dbReference type="ChEBI" id="CHEBI:30616"/>
        <dbReference type="ChEBI" id="CHEBI:33019"/>
        <dbReference type="ChEBI" id="CHEBI:61963"/>
        <dbReference type="ChEBI" id="CHEBI:82748"/>
        <dbReference type="ChEBI" id="CHEBI:141453"/>
        <dbReference type="ChEBI" id="CHEBI:456215"/>
    </reaction>
    <physiologicalReaction direction="left-to-right" evidence="1">
        <dbReference type="Rhea" id="RHEA:57049"/>
    </physiologicalReaction>
</comment>
<comment type="cofactor">
    <cofactor evidence="1">
        <name>Mg(2+)</name>
        <dbReference type="ChEBI" id="CHEBI:18420"/>
    </cofactor>
</comment>
<comment type="cofactor">
    <cofactor evidence="1">
        <name>[4Fe-4S] cluster</name>
        <dbReference type="ChEBI" id="CHEBI:49883"/>
    </cofactor>
    <text evidence="1">Binds 1 [4Fe-4S] cluster per subunit. The cluster is chelated by three Cys residues, the fourth Fe has a free coordination site that may bind a sulfur atom transferred from the persulfide of IscS.</text>
</comment>
<comment type="pathway">
    <text evidence="1">tRNA modification.</text>
</comment>
<comment type="subunit">
    <text evidence="1">Homodimer.</text>
</comment>
<comment type="subcellular location">
    <subcellularLocation>
        <location evidence="1">Cytoplasm</location>
    </subcellularLocation>
</comment>
<comment type="miscellaneous">
    <text evidence="1">The thiolation reaction likely consists of two steps: a first activation step by ATP to form an adenylated intermediate of the target base of tRNA, and a second nucleophilic substitution step of the sulfur (S) atom supplied by the hydrosulfide attached to the Fe-S cluster.</text>
</comment>
<comment type="similarity">
    <text evidence="1">Belongs to the TtcA family.</text>
</comment>
<proteinExistence type="inferred from homology"/>
<gene>
    <name evidence="1" type="primary">ttcA</name>
    <name type="ordered locus">NMC1192</name>
</gene>
<dbReference type="EC" id="2.8.1.-" evidence="1"/>
<dbReference type="EMBL" id="AM421808">
    <property type="protein sequence ID" value="CAM10435.1"/>
    <property type="molecule type" value="Genomic_DNA"/>
</dbReference>
<dbReference type="RefSeq" id="WP_002224505.1">
    <property type="nucleotide sequence ID" value="NC_008767.1"/>
</dbReference>
<dbReference type="SMR" id="A1KU93"/>
<dbReference type="KEGG" id="nmc:NMC1192"/>
<dbReference type="HOGENOM" id="CLU_026481_0_0_4"/>
<dbReference type="Proteomes" id="UP000002286">
    <property type="component" value="Chromosome"/>
</dbReference>
<dbReference type="GO" id="GO:0005737">
    <property type="term" value="C:cytoplasm"/>
    <property type="evidence" value="ECO:0007669"/>
    <property type="project" value="UniProtKB-SubCell"/>
</dbReference>
<dbReference type="GO" id="GO:0051539">
    <property type="term" value="F:4 iron, 4 sulfur cluster binding"/>
    <property type="evidence" value="ECO:0007669"/>
    <property type="project" value="UniProtKB-UniRule"/>
</dbReference>
<dbReference type="GO" id="GO:0005524">
    <property type="term" value="F:ATP binding"/>
    <property type="evidence" value="ECO:0007669"/>
    <property type="project" value="UniProtKB-UniRule"/>
</dbReference>
<dbReference type="GO" id="GO:0000287">
    <property type="term" value="F:magnesium ion binding"/>
    <property type="evidence" value="ECO:0007669"/>
    <property type="project" value="UniProtKB-UniRule"/>
</dbReference>
<dbReference type="GO" id="GO:0016783">
    <property type="term" value="F:sulfurtransferase activity"/>
    <property type="evidence" value="ECO:0007669"/>
    <property type="project" value="UniProtKB-UniRule"/>
</dbReference>
<dbReference type="GO" id="GO:0000049">
    <property type="term" value="F:tRNA binding"/>
    <property type="evidence" value="ECO:0007669"/>
    <property type="project" value="UniProtKB-KW"/>
</dbReference>
<dbReference type="GO" id="GO:0034227">
    <property type="term" value="P:tRNA thio-modification"/>
    <property type="evidence" value="ECO:0007669"/>
    <property type="project" value="UniProtKB-UniRule"/>
</dbReference>
<dbReference type="CDD" id="cd24138">
    <property type="entry name" value="TtcA-like"/>
    <property type="match status" value="1"/>
</dbReference>
<dbReference type="Gene3D" id="3.40.50.620">
    <property type="entry name" value="HUPs"/>
    <property type="match status" value="1"/>
</dbReference>
<dbReference type="HAMAP" id="MF_01850">
    <property type="entry name" value="TtcA"/>
    <property type="match status" value="1"/>
</dbReference>
<dbReference type="InterPro" id="IPR014729">
    <property type="entry name" value="Rossmann-like_a/b/a_fold"/>
</dbReference>
<dbReference type="InterPro" id="IPR011063">
    <property type="entry name" value="TilS/TtcA_N"/>
</dbReference>
<dbReference type="InterPro" id="IPR012089">
    <property type="entry name" value="tRNA_Cyd_32_2_STrfase"/>
</dbReference>
<dbReference type="InterPro" id="IPR035107">
    <property type="entry name" value="tRNA_thiolation_TtcA_Ctu1"/>
</dbReference>
<dbReference type="NCBIfam" id="NF007972">
    <property type="entry name" value="PRK10696.1"/>
    <property type="match status" value="1"/>
</dbReference>
<dbReference type="PANTHER" id="PTHR43686:SF1">
    <property type="entry name" value="AMINOTRAN_5 DOMAIN-CONTAINING PROTEIN"/>
    <property type="match status" value="1"/>
</dbReference>
<dbReference type="PANTHER" id="PTHR43686">
    <property type="entry name" value="SULFURTRANSFERASE-RELATED"/>
    <property type="match status" value="1"/>
</dbReference>
<dbReference type="Pfam" id="PF01171">
    <property type="entry name" value="ATP_bind_3"/>
    <property type="match status" value="1"/>
</dbReference>
<dbReference type="PIRSF" id="PIRSF004976">
    <property type="entry name" value="ATPase_YdaO"/>
    <property type="match status" value="1"/>
</dbReference>
<dbReference type="SUPFAM" id="SSF52402">
    <property type="entry name" value="Adenine nucleotide alpha hydrolases-like"/>
    <property type="match status" value="1"/>
</dbReference>
<organism>
    <name type="scientific">Neisseria meningitidis serogroup C / serotype 2a (strain ATCC 700532 / DSM 15464 / FAM18)</name>
    <dbReference type="NCBI Taxonomy" id="272831"/>
    <lineage>
        <taxon>Bacteria</taxon>
        <taxon>Pseudomonadati</taxon>
        <taxon>Pseudomonadota</taxon>
        <taxon>Betaproteobacteria</taxon>
        <taxon>Neisseriales</taxon>
        <taxon>Neisseriaceae</taxon>
        <taxon>Neisseria</taxon>
    </lineage>
</organism>
<sequence>MSKKTKQELENNKLSKRLRHAVGDAINDFNMIEPDDKIMVCLSGGKDSYALLDILRQLQASAPIDFELVAVNLDQKQPGFPEEVLPTYLESIGVPYKIVEEDTYSTVKRVLDEGKTTCSLCSRLRRGILYRTAKELGCTKIALGHHRDDILATMFLNMFYGGKLKAMPPKLVSDNGEHIVIRPLAYVKEKDLIKYAELKQFPIIPCNLCGSQPNLQRQVIGDMLRDWDKRFPGRIESMFSALQNVVPSHLADTELFDFAGLERGQTLKHGGDLAFDSEKMPERFSDGSEEDESEIKIAPQKAERKVINILANKPKTCGA</sequence>
<feature type="chain" id="PRO_0000348774" description="tRNA-cytidine(32) 2-sulfurtransferase">
    <location>
        <begin position="1"/>
        <end position="319"/>
    </location>
</feature>
<feature type="short sequence motif" description="PP-loop motif" evidence="1">
    <location>
        <begin position="43"/>
        <end position="48"/>
    </location>
</feature>
<feature type="binding site" evidence="1">
    <location>
        <position position="118"/>
    </location>
    <ligand>
        <name>[4Fe-4S] cluster</name>
        <dbReference type="ChEBI" id="CHEBI:49883"/>
    </ligand>
</feature>
<feature type="binding site" evidence="1">
    <location>
        <position position="121"/>
    </location>
    <ligand>
        <name>[4Fe-4S] cluster</name>
        <dbReference type="ChEBI" id="CHEBI:49883"/>
    </ligand>
</feature>
<feature type="binding site" evidence="1">
    <location>
        <position position="209"/>
    </location>
    <ligand>
        <name>[4Fe-4S] cluster</name>
        <dbReference type="ChEBI" id="CHEBI:49883"/>
    </ligand>
</feature>
<accession>A1KU93</accession>
<reference key="1">
    <citation type="journal article" date="2007" name="PLoS Genet.">
        <title>Meningococcal genetic variation mechanisms viewed through comparative analysis of serogroup C strain FAM18.</title>
        <authorList>
            <person name="Bentley S.D."/>
            <person name="Vernikos G.S."/>
            <person name="Snyder L.A.S."/>
            <person name="Churcher C."/>
            <person name="Arrowsmith C."/>
            <person name="Chillingworth T."/>
            <person name="Cronin A."/>
            <person name="Davis P.H."/>
            <person name="Holroyd N.E."/>
            <person name="Jagels K."/>
            <person name="Maddison M."/>
            <person name="Moule S."/>
            <person name="Rabbinowitsch E."/>
            <person name="Sharp S."/>
            <person name="Unwin L."/>
            <person name="Whitehead S."/>
            <person name="Quail M.A."/>
            <person name="Achtman M."/>
            <person name="Barrell B.G."/>
            <person name="Saunders N.J."/>
            <person name="Parkhill J."/>
        </authorList>
    </citation>
    <scope>NUCLEOTIDE SEQUENCE [LARGE SCALE GENOMIC DNA]</scope>
    <source>
        <strain>ATCC 700532 / DSM 15464 / FAM18</strain>
    </source>
</reference>
<name>TTCA_NEIMF</name>
<keyword id="KW-0004">4Fe-4S</keyword>
<keyword id="KW-0067">ATP-binding</keyword>
<keyword id="KW-0963">Cytoplasm</keyword>
<keyword id="KW-0408">Iron</keyword>
<keyword id="KW-0411">Iron-sulfur</keyword>
<keyword id="KW-0460">Magnesium</keyword>
<keyword id="KW-0479">Metal-binding</keyword>
<keyword id="KW-0547">Nucleotide-binding</keyword>
<keyword id="KW-0694">RNA-binding</keyword>
<keyword id="KW-0808">Transferase</keyword>
<keyword id="KW-0819">tRNA processing</keyword>
<keyword id="KW-0820">tRNA-binding</keyword>
<evidence type="ECO:0000255" key="1">
    <source>
        <dbReference type="HAMAP-Rule" id="MF_01850"/>
    </source>
</evidence>
<protein>
    <recommendedName>
        <fullName evidence="1">tRNA-cytidine(32) 2-sulfurtransferase</fullName>
        <ecNumber evidence="1">2.8.1.-</ecNumber>
    </recommendedName>
    <alternativeName>
        <fullName evidence="1">Two-thiocytidine biosynthesis protein A</fullName>
    </alternativeName>
    <alternativeName>
        <fullName evidence="1">tRNA 2-thiocytidine biosynthesis protein TtcA</fullName>
    </alternativeName>
</protein>